<sequence>MEFSKETRRLALQKMQERDLDLLIIGGGITGAGVALQAAASGLDTGLIEMQDFAEGTSSRSTKLVHGGLRYLKQFDVEVVSDTVSERAVVQQIAPHIPKPDPMLLPVYDEPGSTFSMFRLKVAMDLYDLLAGVSNTPAANKVLTKEEVLKREPDLKQEGLLGGGVYLDFRNNDARLVIENIKRANRDGALIASHVKAEDFLLDDKRQIIGVKARDLLTDQEIIIKAKLVINTTGPWSDEIRQFSHKGQPIHQMRPTKGVHLVVDRQKLPVSQPVYVDTGLNDGRMVFVLPREEKTYFGTTDTDYTGDLQHPQVTQEDVDYLLGIVNNRFPNANLTINDIESSWAGLRPLLSGNSASDYNGGNSGKLSDDSFDHLIDTVKAYINHEDSREAVEKAIKQVETSTSEKELDPSAVSRGSSFERDENGLFTLAGGKITDYRKMAEGALKVIIQVLKEDFGKSFKLINSTTYPVSGGEINPANVDSELEAYAQLGTLSGLSMDDARYLANLYGSNAPKVFALTRQLKAAEGLSLAETLSLHYAMDYEMALKPTDYFLRRTNHLLFMRDSLDALIVPVIEEMAKHFDWSTDEKVKQEEELRRVIAENDLSALKGQQED</sequence>
<organism>
    <name type="scientific">Streptococcus pyogenes serotype M6 (strain ATCC BAA-946 / MGAS10394)</name>
    <dbReference type="NCBI Taxonomy" id="286636"/>
    <lineage>
        <taxon>Bacteria</taxon>
        <taxon>Bacillati</taxon>
        <taxon>Bacillota</taxon>
        <taxon>Bacilli</taxon>
        <taxon>Lactobacillales</taxon>
        <taxon>Streptococcaceae</taxon>
        <taxon>Streptococcus</taxon>
    </lineage>
</organism>
<keyword id="KW-0963">Cytoplasm</keyword>
<keyword id="KW-0274">FAD</keyword>
<keyword id="KW-0285">Flavoprotein</keyword>
<keyword id="KW-0319">Glycerol metabolism</keyword>
<keyword id="KW-0560">Oxidoreductase</keyword>
<comment type="catalytic activity">
    <reaction>
        <text>sn-glycerol 3-phosphate + O2 = dihydroxyacetone phosphate + H2O2</text>
        <dbReference type="Rhea" id="RHEA:18369"/>
        <dbReference type="ChEBI" id="CHEBI:15379"/>
        <dbReference type="ChEBI" id="CHEBI:16240"/>
        <dbReference type="ChEBI" id="CHEBI:57597"/>
        <dbReference type="ChEBI" id="CHEBI:57642"/>
        <dbReference type="EC" id="1.1.3.21"/>
    </reaction>
</comment>
<comment type="cofactor">
    <cofactor evidence="1">
        <name>FAD</name>
        <dbReference type="ChEBI" id="CHEBI:57692"/>
    </cofactor>
</comment>
<comment type="subcellular location">
    <subcellularLocation>
        <location evidence="1">Cytoplasm</location>
    </subcellularLocation>
</comment>
<comment type="similarity">
    <text evidence="4">Belongs to the FAD-dependent glycerol-3-phosphate dehydrogenase family.</text>
</comment>
<comment type="caution">
    <text evidence="4">As S.pyogenes is unable to produce acid from glycerol, the significance and/or function of the glpO gene in this organism is at present unknown.</text>
</comment>
<reference key="1">
    <citation type="journal article" date="2004" name="J. Infect. Dis.">
        <title>Progress toward characterization of the group A Streptococcus metagenome: complete genome sequence of a macrolide-resistant serotype M6 strain.</title>
        <authorList>
            <person name="Banks D.J."/>
            <person name="Porcella S.F."/>
            <person name="Barbian K.D."/>
            <person name="Beres S.B."/>
            <person name="Philips L.E."/>
            <person name="Voyich J.M."/>
            <person name="DeLeo F.R."/>
            <person name="Martin J.M."/>
            <person name="Somerville G.A."/>
            <person name="Musser J.M."/>
        </authorList>
    </citation>
    <scope>NUCLEOTIDE SEQUENCE [LARGE SCALE GENOMIC DNA]</scope>
    <source>
        <strain>ATCC BAA-946 / MGAS10394</strain>
    </source>
</reference>
<protein>
    <recommendedName>
        <fullName>Alpha-glycerophosphate oxidase</fullName>
        <ecNumber>1.1.3.21</ecNumber>
    </recommendedName>
    <alternativeName>
        <fullName>Glycerol-3-phosphate oxidase</fullName>
    </alternativeName>
</protein>
<proteinExistence type="inferred from homology"/>
<gene>
    <name type="primary">glpO</name>
    <name type="synonym">glpA</name>
    <name type="ordered locus">M6_Spy1428</name>
</gene>
<dbReference type="EC" id="1.1.3.21"/>
<dbReference type="EMBL" id="CP000003">
    <property type="protein sequence ID" value="AAT87563.1"/>
    <property type="molecule type" value="Genomic_DNA"/>
</dbReference>
<dbReference type="RefSeq" id="WP_011184846.1">
    <property type="nucleotide sequence ID" value="NC_006086.1"/>
</dbReference>
<dbReference type="SMR" id="Q5XAK0"/>
<dbReference type="KEGG" id="spa:M6_Spy1428"/>
<dbReference type="HOGENOM" id="CLU_015740_5_2_9"/>
<dbReference type="Proteomes" id="UP000001167">
    <property type="component" value="Chromosome"/>
</dbReference>
<dbReference type="GO" id="GO:0005737">
    <property type="term" value="C:cytoplasm"/>
    <property type="evidence" value="ECO:0007669"/>
    <property type="project" value="UniProtKB-SubCell"/>
</dbReference>
<dbReference type="GO" id="GO:0004368">
    <property type="term" value="F:glycerol-3-phosphate dehydrogenase (quinone) activity"/>
    <property type="evidence" value="ECO:0007669"/>
    <property type="project" value="InterPro"/>
</dbReference>
<dbReference type="GO" id="GO:0004369">
    <property type="term" value="F:glycerol-3-phosphate oxidase activity"/>
    <property type="evidence" value="ECO:0007669"/>
    <property type="project" value="UniProtKB-EC"/>
</dbReference>
<dbReference type="GO" id="GO:0006071">
    <property type="term" value="P:glycerol metabolic process"/>
    <property type="evidence" value="ECO:0007669"/>
    <property type="project" value="UniProtKB-KW"/>
</dbReference>
<dbReference type="GO" id="GO:0046168">
    <property type="term" value="P:glycerol-3-phosphate catabolic process"/>
    <property type="evidence" value="ECO:0007669"/>
    <property type="project" value="TreeGrafter"/>
</dbReference>
<dbReference type="Gene3D" id="1.10.8.870">
    <property type="entry name" value="Alpha-glycerophosphate oxidase, cap domain"/>
    <property type="match status" value="1"/>
</dbReference>
<dbReference type="Gene3D" id="3.30.9.10">
    <property type="entry name" value="D-Amino Acid Oxidase, subunit A, domain 2"/>
    <property type="match status" value="1"/>
</dbReference>
<dbReference type="Gene3D" id="3.50.50.60">
    <property type="entry name" value="FAD/NAD(P)-binding domain"/>
    <property type="match status" value="2"/>
</dbReference>
<dbReference type="InterPro" id="IPR031656">
    <property type="entry name" value="DAO_C"/>
</dbReference>
<dbReference type="InterPro" id="IPR038299">
    <property type="entry name" value="DAO_C_sf"/>
</dbReference>
<dbReference type="InterPro" id="IPR006076">
    <property type="entry name" value="FAD-dep_OxRdtase"/>
</dbReference>
<dbReference type="InterPro" id="IPR036188">
    <property type="entry name" value="FAD/NAD-bd_sf"/>
</dbReference>
<dbReference type="InterPro" id="IPR000447">
    <property type="entry name" value="G3P_DH_FAD-dep"/>
</dbReference>
<dbReference type="NCBIfam" id="NF033461">
    <property type="entry name" value="glycerol3P_ox_1"/>
    <property type="match status" value="1"/>
</dbReference>
<dbReference type="PANTHER" id="PTHR11985:SF35">
    <property type="entry name" value="ANAEROBIC GLYCEROL-3-PHOSPHATE DEHYDROGENASE SUBUNIT A"/>
    <property type="match status" value="1"/>
</dbReference>
<dbReference type="PANTHER" id="PTHR11985">
    <property type="entry name" value="GLYCEROL-3-PHOSPHATE DEHYDROGENASE"/>
    <property type="match status" value="1"/>
</dbReference>
<dbReference type="Pfam" id="PF01266">
    <property type="entry name" value="DAO"/>
    <property type="match status" value="1"/>
</dbReference>
<dbReference type="Pfam" id="PF16901">
    <property type="entry name" value="DAO_C"/>
    <property type="match status" value="1"/>
</dbReference>
<dbReference type="PRINTS" id="PR01001">
    <property type="entry name" value="FADG3PDH"/>
</dbReference>
<dbReference type="SUPFAM" id="SSF54373">
    <property type="entry name" value="FAD-linked reductases, C-terminal domain"/>
    <property type="match status" value="1"/>
</dbReference>
<dbReference type="SUPFAM" id="SSF51905">
    <property type="entry name" value="FAD/NAD(P)-binding domain"/>
    <property type="match status" value="1"/>
</dbReference>
<dbReference type="PROSITE" id="PS00977">
    <property type="entry name" value="FAD_G3PDH_1"/>
    <property type="match status" value="1"/>
</dbReference>
<feature type="chain" id="PRO_0000126112" description="Alpha-glycerophosphate oxidase">
    <location>
        <begin position="1"/>
        <end position="612"/>
    </location>
</feature>
<feature type="region of interest" description="Disordered" evidence="3">
    <location>
        <begin position="399"/>
        <end position="418"/>
    </location>
</feature>
<feature type="compositionally biased region" description="Basic and acidic residues" evidence="3">
    <location>
        <begin position="399"/>
        <end position="408"/>
    </location>
</feature>
<feature type="binding site" evidence="2">
    <location>
        <begin position="21"/>
        <end position="49"/>
    </location>
    <ligand>
        <name>FAD</name>
        <dbReference type="ChEBI" id="CHEBI:57692"/>
    </ligand>
</feature>
<evidence type="ECO:0000250" key="1"/>
<evidence type="ECO:0000255" key="2"/>
<evidence type="ECO:0000256" key="3">
    <source>
        <dbReference type="SAM" id="MobiDB-lite"/>
    </source>
</evidence>
<evidence type="ECO:0000305" key="4"/>
<accession>Q5XAK0</accession>
<name>GLPO_STRP6</name>